<feature type="chain" id="PRO_0000268586" description="Bifunctional protein FolD">
    <location>
        <begin position="1"/>
        <end position="279"/>
    </location>
</feature>
<feature type="binding site" evidence="1">
    <location>
        <begin position="159"/>
        <end position="161"/>
    </location>
    <ligand>
        <name>NADP(+)</name>
        <dbReference type="ChEBI" id="CHEBI:58349"/>
    </ligand>
</feature>
<feature type="binding site" evidence="1">
    <location>
        <position position="184"/>
    </location>
    <ligand>
        <name>NADP(+)</name>
        <dbReference type="ChEBI" id="CHEBI:58349"/>
    </ligand>
</feature>
<feature type="binding site" evidence="1">
    <location>
        <position position="225"/>
    </location>
    <ligand>
        <name>NADP(+)</name>
        <dbReference type="ChEBI" id="CHEBI:58349"/>
    </ligand>
</feature>
<sequence length="279" mass="29550">MILDGKGLAARRLELLKEDIIEGGLSPTLATVIVGDDPASHMYVRMKHRACEQVGISSVNISLPEDTTTRTILERIRQLNEDPDIDGILVQLPLPKSIDTEAVLAAILPEKDVDGFHPLNMGRLVTGLPGPRPCTPNGIMTLLHENKISIAGKRAVVVGRSVDVGRPIALLLLHADATVTMCHSKTENLKEITKQADILVSAAGKAGIITADMVKPGATVVDVGTNQVNGKLCGDVAFDEVEKIAGAITPVPGGVGPMTIASLMENTADIARNRCGHFM</sequence>
<evidence type="ECO:0000255" key="1">
    <source>
        <dbReference type="HAMAP-Rule" id="MF_01576"/>
    </source>
</evidence>
<organism>
    <name type="scientific">Methanospirillum hungatei JF-1 (strain ATCC 27890 / DSM 864 / NBRC 100397 / JF-1)</name>
    <dbReference type="NCBI Taxonomy" id="323259"/>
    <lineage>
        <taxon>Archaea</taxon>
        <taxon>Methanobacteriati</taxon>
        <taxon>Methanobacteriota</taxon>
        <taxon>Stenosarchaea group</taxon>
        <taxon>Methanomicrobia</taxon>
        <taxon>Methanomicrobiales</taxon>
        <taxon>Methanospirillaceae</taxon>
        <taxon>Methanospirillum</taxon>
    </lineage>
</organism>
<protein>
    <recommendedName>
        <fullName evidence="1">Bifunctional protein FolD</fullName>
    </recommendedName>
    <domain>
        <recommendedName>
            <fullName evidence="1">Methylenetetrahydrofolate dehydrogenase</fullName>
            <ecNumber evidence="1">1.5.1.5</ecNumber>
        </recommendedName>
    </domain>
    <domain>
        <recommendedName>
            <fullName evidence="1">Methenyltetrahydrofolate cyclohydrolase</fullName>
            <ecNumber evidence="1">3.5.4.9</ecNumber>
        </recommendedName>
    </domain>
</protein>
<name>FOLD_METHJ</name>
<dbReference type="EC" id="1.5.1.5" evidence="1"/>
<dbReference type="EC" id="3.5.4.9" evidence="1"/>
<dbReference type="EMBL" id="CP000254">
    <property type="protein sequence ID" value="ABD39800.1"/>
    <property type="molecule type" value="Genomic_DNA"/>
</dbReference>
<dbReference type="RefSeq" id="WP_011447097.1">
    <property type="nucleotide sequence ID" value="NC_007796.1"/>
</dbReference>
<dbReference type="SMR" id="Q2FR55"/>
<dbReference type="STRING" id="323259.Mhun_0022"/>
<dbReference type="EnsemblBacteria" id="ABD39800">
    <property type="protein sequence ID" value="ABD39800"/>
    <property type="gene ID" value="Mhun_0022"/>
</dbReference>
<dbReference type="GeneID" id="3924803"/>
<dbReference type="KEGG" id="mhu:Mhun_0022"/>
<dbReference type="eggNOG" id="arCOG04538">
    <property type="taxonomic scope" value="Archaea"/>
</dbReference>
<dbReference type="HOGENOM" id="CLU_034045_2_1_2"/>
<dbReference type="InParanoid" id="Q2FR55"/>
<dbReference type="OrthoDB" id="9455at2157"/>
<dbReference type="UniPathway" id="UPA00193"/>
<dbReference type="Proteomes" id="UP000001941">
    <property type="component" value="Chromosome"/>
</dbReference>
<dbReference type="GO" id="GO:0005829">
    <property type="term" value="C:cytosol"/>
    <property type="evidence" value="ECO:0007669"/>
    <property type="project" value="TreeGrafter"/>
</dbReference>
<dbReference type="GO" id="GO:0004477">
    <property type="term" value="F:methenyltetrahydrofolate cyclohydrolase activity"/>
    <property type="evidence" value="ECO:0007669"/>
    <property type="project" value="UniProtKB-UniRule"/>
</dbReference>
<dbReference type="GO" id="GO:0004488">
    <property type="term" value="F:methylenetetrahydrofolate dehydrogenase (NADP+) activity"/>
    <property type="evidence" value="ECO:0007669"/>
    <property type="project" value="UniProtKB-UniRule"/>
</dbReference>
<dbReference type="GO" id="GO:0000105">
    <property type="term" value="P:L-histidine biosynthetic process"/>
    <property type="evidence" value="ECO:0007669"/>
    <property type="project" value="UniProtKB-KW"/>
</dbReference>
<dbReference type="GO" id="GO:0009086">
    <property type="term" value="P:methionine biosynthetic process"/>
    <property type="evidence" value="ECO:0007669"/>
    <property type="project" value="UniProtKB-KW"/>
</dbReference>
<dbReference type="GO" id="GO:0006164">
    <property type="term" value="P:purine nucleotide biosynthetic process"/>
    <property type="evidence" value="ECO:0007669"/>
    <property type="project" value="UniProtKB-KW"/>
</dbReference>
<dbReference type="GO" id="GO:0035999">
    <property type="term" value="P:tetrahydrofolate interconversion"/>
    <property type="evidence" value="ECO:0007669"/>
    <property type="project" value="UniProtKB-UniRule"/>
</dbReference>
<dbReference type="CDD" id="cd01080">
    <property type="entry name" value="NAD_bind_m-THF_DH_Cyclohyd"/>
    <property type="match status" value="1"/>
</dbReference>
<dbReference type="FunFam" id="3.40.50.720:FF:000094">
    <property type="entry name" value="Bifunctional protein FolD"/>
    <property type="match status" value="1"/>
</dbReference>
<dbReference type="FunFam" id="3.40.50.10860:FF:000005">
    <property type="entry name" value="C-1-tetrahydrofolate synthase, cytoplasmic, putative"/>
    <property type="match status" value="1"/>
</dbReference>
<dbReference type="Gene3D" id="3.40.50.10860">
    <property type="entry name" value="Leucine Dehydrogenase, chain A, domain 1"/>
    <property type="match status" value="1"/>
</dbReference>
<dbReference type="Gene3D" id="3.40.50.720">
    <property type="entry name" value="NAD(P)-binding Rossmann-like Domain"/>
    <property type="match status" value="1"/>
</dbReference>
<dbReference type="HAMAP" id="MF_01576">
    <property type="entry name" value="THF_DHG_CYH"/>
    <property type="match status" value="1"/>
</dbReference>
<dbReference type="InterPro" id="IPR046346">
    <property type="entry name" value="Aminoacid_DH-like_N_sf"/>
</dbReference>
<dbReference type="InterPro" id="IPR036291">
    <property type="entry name" value="NAD(P)-bd_dom_sf"/>
</dbReference>
<dbReference type="InterPro" id="IPR000672">
    <property type="entry name" value="THF_DH/CycHdrlase"/>
</dbReference>
<dbReference type="InterPro" id="IPR020630">
    <property type="entry name" value="THF_DH/CycHdrlase_cat_dom"/>
</dbReference>
<dbReference type="InterPro" id="IPR020867">
    <property type="entry name" value="THF_DH/CycHdrlase_CS"/>
</dbReference>
<dbReference type="InterPro" id="IPR020631">
    <property type="entry name" value="THF_DH/CycHdrlase_NAD-bd_dom"/>
</dbReference>
<dbReference type="NCBIfam" id="NF010775">
    <property type="entry name" value="PRK14178.1"/>
    <property type="match status" value="1"/>
</dbReference>
<dbReference type="NCBIfam" id="NF010783">
    <property type="entry name" value="PRK14186.1"/>
    <property type="match status" value="1"/>
</dbReference>
<dbReference type="PANTHER" id="PTHR48099:SF5">
    <property type="entry name" value="C-1-TETRAHYDROFOLATE SYNTHASE, CYTOPLASMIC"/>
    <property type="match status" value="1"/>
</dbReference>
<dbReference type="PANTHER" id="PTHR48099">
    <property type="entry name" value="C-1-TETRAHYDROFOLATE SYNTHASE, CYTOPLASMIC-RELATED"/>
    <property type="match status" value="1"/>
</dbReference>
<dbReference type="Pfam" id="PF00763">
    <property type="entry name" value="THF_DHG_CYH"/>
    <property type="match status" value="1"/>
</dbReference>
<dbReference type="Pfam" id="PF02882">
    <property type="entry name" value="THF_DHG_CYH_C"/>
    <property type="match status" value="1"/>
</dbReference>
<dbReference type="PRINTS" id="PR00085">
    <property type="entry name" value="THFDHDRGNASE"/>
</dbReference>
<dbReference type="SUPFAM" id="SSF53223">
    <property type="entry name" value="Aminoacid dehydrogenase-like, N-terminal domain"/>
    <property type="match status" value="1"/>
</dbReference>
<dbReference type="SUPFAM" id="SSF51735">
    <property type="entry name" value="NAD(P)-binding Rossmann-fold domains"/>
    <property type="match status" value="1"/>
</dbReference>
<dbReference type="PROSITE" id="PS00767">
    <property type="entry name" value="THF_DHG_CYH_2"/>
    <property type="match status" value="1"/>
</dbReference>
<gene>
    <name evidence="1" type="primary">folD</name>
    <name type="ordered locus">Mhun_0022</name>
</gene>
<comment type="function">
    <text evidence="1">Catalyzes the oxidation of 5,10-methylenetetrahydrofolate to 5,10-methenyltetrahydrofolate and then the hydrolysis of 5,10-methenyltetrahydrofolate to 10-formyltetrahydrofolate.</text>
</comment>
<comment type="catalytic activity">
    <reaction evidence="1">
        <text>(6R)-5,10-methylene-5,6,7,8-tetrahydrofolate + NADP(+) = (6R)-5,10-methenyltetrahydrofolate + NADPH</text>
        <dbReference type="Rhea" id="RHEA:22812"/>
        <dbReference type="ChEBI" id="CHEBI:15636"/>
        <dbReference type="ChEBI" id="CHEBI:57455"/>
        <dbReference type="ChEBI" id="CHEBI:57783"/>
        <dbReference type="ChEBI" id="CHEBI:58349"/>
        <dbReference type="EC" id="1.5.1.5"/>
    </reaction>
</comment>
<comment type="catalytic activity">
    <reaction evidence="1">
        <text>(6R)-5,10-methenyltetrahydrofolate + H2O = (6R)-10-formyltetrahydrofolate + H(+)</text>
        <dbReference type="Rhea" id="RHEA:23700"/>
        <dbReference type="ChEBI" id="CHEBI:15377"/>
        <dbReference type="ChEBI" id="CHEBI:15378"/>
        <dbReference type="ChEBI" id="CHEBI:57455"/>
        <dbReference type="ChEBI" id="CHEBI:195366"/>
        <dbReference type="EC" id="3.5.4.9"/>
    </reaction>
</comment>
<comment type="pathway">
    <text evidence="1">One-carbon metabolism; tetrahydrofolate interconversion.</text>
</comment>
<comment type="subunit">
    <text evidence="1">Homodimer.</text>
</comment>
<comment type="similarity">
    <text evidence="1">Belongs to the tetrahydrofolate dehydrogenase/cyclohydrolase family.</text>
</comment>
<keyword id="KW-0028">Amino-acid biosynthesis</keyword>
<keyword id="KW-0368">Histidine biosynthesis</keyword>
<keyword id="KW-0378">Hydrolase</keyword>
<keyword id="KW-0486">Methionine biosynthesis</keyword>
<keyword id="KW-0511">Multifunctional enzyme</keyword>
<keyword id="KW-0521">NADP</keyword>
<keyword id="KW-0554">One-carbon metabolism</keyword>
<keyword id="KW-0560">Oxidoreductase</keyword>
<keyword id="KW-0658">Purine biosynthesis</keyword>
<keyword id="KW-1185">Reference proteome</keyword>
<proteinExistence type="inferred from homology"/>
<accession>Q2FR55</accession>
<reference key="1">
    <citation type="journal article" date="2016" name="Stand. Genomic Sci.">
        <title>Complete genome sequence of Methanospirillum hungatei type strain JF1.</title>
        <authorList>
            <person name="Gunsalus R.P."/>
            <person name="Cook L.E."/>
            <person name="Crable B."/>
            <person name="Rohlin L."/>
            <person name="McDonald E."/>
            <person name="Mouttaki H."/>
            <person name="Sieber J.R."/>
            <person name="Poweleit N."/>
            <person name="Zhou H."/>
            <person name="Lapidus A.L."/>
            <person name="Daligault H.E."/>
            <person name="Land M."/>
            <person name="Gilna P."/>
            <person name="Ivanova N."/>
            <person name="Kyrpides N."/>
            <person name="Culley D.E."/>
            <person name="McInerney M.J."/>
        </authorList>
    </citation>
    <scope>NUCLEOTIDE SEQUENCE [LARGE SCALE GENOMIC DNA]</scope>
    <source>
        <strain>ATCC 27890 / DSM 864 / NBRC 100397 / JF-1</strain>
    </source>
</reference>